<comment type="function">
    <text evidence="1">Component of the ERMES/MDM complex, which serves as a molecular tether to connect the endoplasmic reticulum (ER) and mitochondria. Components of this complex are involved in the control of mitochondrial shape and protein biogenesis, and function in nonvesicular lipid trafficking between the ER and mitochondria. The MDM12-MMM1 subcomplex functions in the major beta-barrel assembly pathway that is responsible for biogenesis of all outer membrane beta-barrel proteins, and acts in a late step after the SAM complex. The MDM10-MDM12-MMM1 subcomplex further acts in the TOM40-specific pathway after the action of the MDM12-MMM1 complex. Essential for establishing and maintaining the structure of mitochondria and maintenance of mtDNA nucleoids.</text>
</comment>
<comment type="subunit">
    <text evidence="1">Homodimer. Component of the ER-mitochondria encounter structure (ERMES) or MDM complex, composed of MMM1, MDM10, MDM12 and MDM34. A MMM1 homodimer associates with one molecule of MDM12 on each side in a pairwise head-to-tail manner, and the SMP-LTD domains of MMM1 and MDM12 generate a continuous hydrophobic tunnel for phospholipid trafficking.</text>
</comment>
<comment type="subcellular location">
    <subcellularLocation>
        <location evidence="1">Endoplasmic reticulum membrane</location>
        <topology evidence="1">Single-pass type I membrane protein</topology>
    </subcellularLocation>
    <text evidence="1">The ERMES/MDM complex localizes to a few discrete foci (around 10 per single cell), that represent mitochondria-endoplasmic reticulum junctions. These foci are often found next to mtDNA nucleoids.</text>
</comment>
<comment type="domain">
    <text evidence="1">The SMP-LTD domain is a barrel-like domain that can bind various types of glycerophospholipids in its interior and mediate their transfer between two adjacent bilayers.</text>
</comment>
<comment type="similarity">
    <text evidence="1">Belongs to the MMM1 family.</text>
</comment>
<feature type="chain" id="PRO_0000384210" description="Maintenance of mitochondrial morphology protein 1">
    <location>
        <begin position="1"/>
        <end position="540"/>
    </location>
</feature>
<feature type="topological domain" description="Lumenal" evidence="1">
    <location>
        <begin position="1"/>
        <end position="25"/>
    </location>
</feature>
<feature type="transmembrane region" description="Helical" evidence="1">
    <location>
        <begin position="26"/>
        <end position="46"/>
    </location>
</feature>
<feature type="topological domain" description="Cytoplasmic" evidence="1">
    <location>
        <begin position="47"/>
        <end position="540"/>
    </location>
</feature>
<feature type="domain" description="SMP-LTD" evidence="1">
    <location>
        <begin position="134"/>
        <end position="409"/>
    </location>
</feature>
<feature type="region of interest" description="Disordered" evidence="2">
    <location>
        <begin position="52"/>
        <end position="135"/>
    </location>
</feature>
<feature type="region of interest" description="Disordered" evidence="2">
    <location>
        <begin position="275"/>
        <end position="331"/>
    </location>
</feature>
<feature type="region of interest" description="Disordered" evidence="2">
    <location>
        <begin position="416"/>
        <end position="471"/>
    </location>
</feature>
<feature type="region of interest" description="Disordered" evidence="2">
    <location>
        <begin position="509"/>
        <end position="540"/>
    </location>
</feature>
<feature type="compositionally biased region" description="Polar residues" evidence="2">
    <location>
        <begin position="69"/>
        <end position="81"/>
    </location>
</feature>
<feature type="compositionally biased region" description="Polar residues" evidence="2">
    <location>
        <begin position="88"/>
        <end position="105"/>
    </location>
</feature>
<feature type="compositionally biased region" description="Polar residues" evidence="2">
    <location>
        <begin position="112"/>
        <end position="121"/>
    </location>
</feature>
<feature type="compositionally biased region" description="Basic residues" evidence="2">
    <location>
        <begin position="122"/>
        <end position="132"/>
    </location>
</feature>
<feature type="compositionally biased region" description="Low complexity" evidence="2">
    <location>
        <begin position="321"/>
        <end position="331"/>
    </location>
</feature>
<feature type="compositionally biased region" description="Gly residues" evidence="2">
    <location>
        <begin position="442"/>
        <end position="471"/>
    </location>
</feature>
<feature type="compositionally biased region" description="Gly residues" evidence="2">
    <location>
        <begin position="511"/>
        <end position="521"/>
    </location>
</feature>
<proteinExistence type="inferred from homology"/>
<organism>
    <name type="scientific">Blastomyces gilchristii (strain SLH14081)</name>
    <name type="common">Blastomyces dermatitidis</name>
    <dbReference type="NCBI Taxonomy" id="559298"/>
    <lineage>
        <taxon>Eukaryota</taxon>
        <taxon>Fungi</taxon>
        <taxon>Dikarya</taxon>
        <taxon>Ascomycota</taxon>
        <taxon>Pezizomycotina</taxon>
        <taxon>Eurotiomycetes</taxon>
        <taxon>Eurotiomycetidae</taxon>
        <taxon>Onygenales</taxon>
        <taxon>Ajellomycetaceae</taxon>
        <taxon>Blastomyces</taxon>
    </lineage>
</organism>
<protein>
    <recommendedName>
        <fullName evidence="1">Maintenance of mitochondrial morphology protein 1</fullName>
    </recommendedName>
</protein>
<name>MMM1_BLAGS</name>
<sequence>MAGPSNQTQPPPPVLTQPSLSFTQGLLVGQLSVVLLIGAFIKFFIFGEAPPHPSRNGLSNRTSSHRRSYSLNSISADSSPRTLREKPSTSNILRPVPSSSTNTRSILRKTYYSATPTNPTSKHSRSRPHHSSHQPESLDWFNVLIAQTIAQYRQTAYILKDSPTSSILASLSEALNNPEKKPSFIDSIKVTDISLGEEFPIFSNCRVIAVEDPNSDGGRLQALMDVDLSDDNLSLAVETSLLLNYPKPFSAVLPVALAVSVVRFSGTLCISFVPGPGTSDQTMSPSPSPPKEASAENIAVDHQSPERQSARQRAPHQHKYTNTNTAGATAAATADDNDTHAKLPHGIPKTSLAFSFLPDYRLDLSVRSLIGSRSRLQDVPKVAQLVEARVQAWFEERVVEPRVQVVGLPNIWPRMGRTGVRGSQEETEAGAGGSAPADIPGTAGGDGVGVRGGGGGGGGGGGVGGSGGGSMRGTSGWGMGYDGLRYRHNAHGDGGVGAGPGQSAGAALYGGAQGGGGGGGRGGEEQFAIPGSMPDPVVVT</sequence>
<gene>
    <name evidence="1" type="primary">MMM1</name>
    <name type="ORF">BDBG_07723</name>
</gene>
<accession>C5JYV0</accession>
<accession>A0A179UW91</accession>
<reference key="1">
    <citation type="journal article" date="2015" name="PLoS Genet.">
        <title>The dynamic genome and transcriptome of the human fungal pathogen Blastomyces and close relative Emmonsia.</title>
        <authorList>
            <person name="Munoz J.F."/>
            <person name="Gauthier G.M."/>
            <person name="Desjardins C.A."/>
            <person name="Gallo J.E."/>
            <person name="Holder J."/>
            <person name="Sullivan T.D."/>
            <person name="Marty A.J."/>
            <person name="Carmen J.C."/>
            <person name="Chen Z."/>
            <person name="Ding L."/>
            <person name="Gujja S."/>
            <person name="Magrini V."/>
            <person name="Misas E."/>
            <person name="Mitreva M."/>
            <person name="Priest M."/>
            <person name="Saif S."/>
            <person name="Whiston E.A."/>
            <person name="Young S."/>
            <person name="Zeng Q."/>
            <person name="Goldman W.E."/>
            <person name="Mardis E.R."/>
            <person name="Taylor J.W."/>
            <person name="McEwen J.G."/>
            <person name="Clay O.K."/>
            <person name="Klein B.S."/>
            <person name="Cuomo C.A."/>
        </authorList>
    </citation>
    <scope>NUCLEOTIDE SEQUENCE [LARGE SCALE GENOMIC DNA]</scope>
    <source>
        <strain>SLH14081</strain>
    </source>
</reference>
<evidence type="ECO:0000255" key="1">
    <source>
        <dbReference type="HAMAP-Rule" id="MF_03103"/>
    </source>
</evidence>
<evidence type="ECO:0000256" key="2">
    <source>
        <dbReference type="SAM" id="MobiDB-lite"/>
    </source>
</evidence>
<dbReference type="EMBL" id="GG657467">
    <property type="protein sequence ID" value="OAT12375.1"/>
    <property type="molecule type" value="Genomic_DNA"/>
</dbReference>
<dbReference type="RefSeq" id="XP_002621884.1">
    <property type="nucleotide sequence ID" value="XM_002621838.1"/>
</dbReference>
<dbReference type="SMR" id="C5JYV0"/>
<dbReference type="STRING" id="559298.C5JYV0"/>
<dbReference type="GeneID" id="8508790"/>
<dbReference type="KEGG" id="bgh:BDBG_07723"/>
<dbReference type="VEuPathDB" id="FungiDB:BDBG_07723"/>
<dbReference type="HOGENOM" id="CLU_032730_2_0_1"/>
<dbReference type="OrthoDB" id="5376138at2759"/>
<dbReference type="Proteomes" id="UP000002038">
    <property type="component" value="Unassembled WGS sequence"/>
</dbReference>
<dbReference type="GO" id="GO:0005789">
    <property type="term" value="C:endoplasmic reticulum membrane"/>
    <property type="evidence" value="ECO:0007669"/>
    <property type="project" value="UniProtKB-SubCell"/>
</dbReference>
<dbReference type="GO" id="GO:0032865">
    <property type="term" value="C:ERMES complex"/>
    <property type="evidence" value="ECO:0007669"/>
    <property type="project" value="UniProtKB-UniRule"/>
</dbReference>
<dbReference type="GO" id="GO:0008289">
    <property type="term" value="F:lipid binding"/>
    <property type="evidence" value="ECO:0007669"/>
    <property type="project" value="UniProtKB-KW"/>
</dbReference>
<dbReference type="GO" id="GO:0000002">
    <property type="term" value="P:mitochondrial genome maintenance"/>
    <property type="evidence" value="ECO:0007669"/>
    <property type="project" value="UniProtKB-UniRule"/>
</dbReference>
<dbReference type="GO" id="GO:1990456">
    <property type="term" value="P:mitochondrion-endoplasmic reticulum membrane tethering"/>
    <property type="evidence" value="ECO:0007669"/>
    <property type="project" value="TreeGrafter"/>
</dbReference>
<dbReference type="GO" id="GO:0015914">
    <property type="term" value="P:phospholipid transport"/>
    <property type="evidence" value="ECO:0007669"/>
    <property type="project" value="TreeGrafter"/>
</dbReference>
<dbReference type="GO" id="GO:0045040">
    <property type="term" value="P:protein insertion into mitochondrial outer membrane"/>
    <property type="evidence" value="ECO:0007669"/>
    <property type="project" value="UniProtKB-UniRule"/>
</dbReference>
<dbReference type="CDD" id="cd21671">
    <property type="entry name" value="SMP_Mmm1"/>
    <property type="match status" value="1"/>
</dbReference>
<dbReference type="HAMAP" id="MF_03103">
    <property type="entry name" value="Mmm1"/>
    <property type="match status" value="1"/>
</dbReference>
<dbReference type="InterPro" id="IPR027537">
    <property type="entry name" value="Mmm1"/>
</dbReference>
<dbReference type="InterPro" id="IPR019411">
    <property type="entry name" value="MMM1_dom"/>
</dbReference>
<dbReference type="InterPro" id="IPR031468">
    <property type="entry name" value="SMP_LBD"/>
</dbReference>
<dbReference type="PANTHER" id="PTHR13466:SF0">
    <property type="entry name" value="SMP-LTD DOMAIN-CONTAINING PROTEIN"/>
    <property type="match status" value="1"/>
</dbReference>
<dbReference type="PANTHER" id="PTHR13466">
    <property type="entry name" value="TEX2 PROTEIN-RELATED"/>
    <property type="match status" value="1"/>
</dbReference>
<dbReference type="Pfam" id="PF10296">
    <property type="entry name" value="MMM1"/>
    <property type="match status" value="1"/>
</dbReference>
<dbReference type="PROSITE" id="PS51847">
    <property type="entry name" value="SMP"/>
    <property type="match status" value="1"/>
</dbReference>
<keyword id="KW-0256">Endoplasmic reticulum</keyword>
<keyword id="KW-0445">Lipid transport</keyword>
<keyword id="KW-0446">Lipid-binding</keyword>
<keyword id="KW-0472">Membrane</keyword>
<keyword id="KW-1185">Reference proteome</keyword>
<keyword id="KW-0812">Transmembrane</keyword>
<keyword id="KW-1133">Transmembrane helix</keyword>
<keyword id="KW-0813">Transport</keyword>